<comment type="function">
    <text evidence="1">Catalyzes the reversible interconversion of serine and glycine with tetrahydrofolate (THF) serving as the one-carbon carrier. This reaction serves as the major source of one-carbon groups required for the biosynthesis of purines, thymidylate, methionine, and other important biomolecules. Also exhibits THF-independent aldolase activity toward beta-hydroxyamino acids, producing glycine and aldehydes, via a retro-aldol mechanism.</text>
</comment>
<comment type="catalytic activity">
    <reaction evidence="1">
        <text>(6R)-5,10-methylene-5,6,7,8-tetrahydrofolate + glycine + H2O = (6S)-5,6,7,8-tetrahydrofolate + L-serine</text>
        <dbReference type="Rhea" id="RHEA:15481"/>
        <dbReference type="ChEBI" id="CHEBI:15377"/>
        <dbReference type="ChEBI" id="CHEBI:15636"/>
        <dbReference type="ChEBI" id="CHEBI:33384"/>
        <dbReference type="ChEBI" id="CHEBI:57305"/>
        <dbReference type="ChEBI" id="CHEBI:57453"/>
        <dbReference type="EC" id="2.1.2.1"/>
    </reaction>
</comment>
<comment type="cofactor">
    <cofactor evidence="1">
        <name>pyridoxal 5'-phosphate</name>
        <dbReference type="ChEBI" id="CHEBI:597326"/>
    </cofactor>
</comment>
<comment type="pathway">
    <text evidence="1">One-carbon metabolism; tetrahydrofolate interconversion.</text>
</comment>
<comment type="pathway">
    <text evidence="1">Amino-acid biosynthesis; glycine biosynthesis; glycine from L-serine: step 1/1.</text>
</comment>
<comment type="subunit">
    <text evidence="1">Homodimer.</text>
</comment>
<comment type="subcellular location">
    <subcellularLocation>
        <location evidence="1">Cytoplasm</location>
    </subcellularLocation>
</comment>
<comment type="similarity">
    <text evidence="1">Belongs to the SHMT family.</text>
</comment>
<reference key="1">
    <citation type="journal article" date="2003" name="Nature">
        <title>Genome divergence in two Prochlorococcus ecotypes reflects oceanic niche differentiation.</title>
        <authorList>
            <person name="Rocap G."/>
            <person name="Larimer F.W."/>
            <person name="Lamerdin J.E."/>
            <person name="Malfatti S."/>
            <person name="Chain P."/>
            <person name="Ahlgren N.A."/>
            <person name="Arellano A."/>
            <person name="Coleman M."/>
            <person name="Hauser L."/>
            <person name="Hess W.R."/>
            <person name="Johnson Z.I."/>
            <person name="Land M.L."/>
            <person name="Lindell D."/>
            <person name="Post A.F."/>
            <person name="Regala W."/>
            <person name="Shah M."/>
            <person name="Shaw S.L."/>
            <person name="Steglich C."/>
            <person name="Sullivan M.B."/>
            <person name="Ting C.S."/>
            <person name="Tolonen A."/>
            <person name="Webb E.A."/>
            <person name="Zinser E.R."/>
            <person name="Chisholm S.W."/>
        </authorList>
    </citation>
    <scope>NUCLEOTIDE SEQUENCE [LARGE SCALE GENOMIC DNA]</scope>
    <source>
        <strain>MIT 9313</strain>
    </source>
</reference>
<dbReference type="EC" id="2.1.2.1" evidence="1"/>
<dbReference type="EMBL" id="BX548175">
    <property type="protein sequence ID" value="CAE22022.1"/>
    <property type="molecule type" value="Genomic_DNA"/>
</dbReference>
<dbReference type="RefSeq" id="WP_011131214.1">
    <property type="nucleotide sequence ID" value="NC_005071.1"/>
</dbReference>
<dbReference type="SMR" id="Q7V4U3"/>
<dbReference type="KEGG" id="pmt:PMT_1847"/>
<dbReference type="eggNOG" id="COG0112">
    <property type="taxonomic scope" value="Bacteria"/>
</dbReference>
<dbReference type="HOGENOM" id="CLU_022477_2_1_3"/>
<dbReference type="OrthoDB" id="9803846at2"/>
<dbReference type="UniPathway" id="UPA00193"/>
<dbReference type="UniPathway" id="UPA00288">
    <property type="reaction ID" value="UER01023"/>
</dbReference>
<dbReference type="Proteomes" id="UP000001423">
    <property type="component" value="Chromosome"/>
</dbReference>
<dbReference type="GO" id="GO:0005829">
    <property type="term" value="C:cytosol"/>
    <property type="evidence" value="ECO:0007669"/>
    <property type="project" value="TreeGrafter"/>
</dbReference>
<dbReference type="GO" id="GO:0004372">
    <property type="term" value="F:glycine hydroxymethyltransferase activity"/>
    <property type="evidence" value="ECO:0007669"/>
    <property type="project" value="UniProtKB-UniRule"/>
</dbReference>
<dbReference type="GO" id="GO:0030170">
    <property type="term" value="F:pyridoxal phosphate binding"/>
    <property type="evidence" value="ECO:0007669"/>
    <property type="project" value="UniProtKB-UniRule"/>
</dbReference>
<dbReference type="GO" id="GO:0019264">
    <property type="term" value="P:glycine biosynthetic process from serine"/>
    <property type="evidence" value="ECO:0007669"/>
    <property type="project" value="UniProtKB-UniRule"/>
</dbReference>
<dbReference type="GO" id="GO:0035999">
    <property type="term" value="P:tetrahydrofolate interconversion"/>
    <property type="evidence" value="ECO:0007669"/>
    <property type="project" value="UniProtKB-UniRule"/>
</dbReference>
<dbReference type="CDD" id="cd00378">
    <property type="entry name" value="SHMT"/>
    <property type="match status" value="1"/>
</dbReference>
<dbReference type="FunFam" id="3.40.640.10:FF:000001">
    <property type="entry name" value="Serine hydroxymethyltransferase"/>
    <property type="match status" value="1"/>
</dbReference>
<dbReference type="Gene3D" id="3.90.1150.10">
    <property type="entry name" value="Aspartate Aminotransferase, domain 1"/>
    <property type="match status" value="1"/>
</dbReference>
<dbReference type="Gene3D" id="3.40.640.10">
    <property type="entry name" value="Type I PLP-dependent aspartate aminotransferase-like (Major domain)"/>
    <property type="match status" value="1"/>
</dbReference>
<dbReference type="HAMAP" id="MF_00051">
    <property type="entry name" value="SHMT"/>
    <property type="match status" value="1"/>
</dbReference>
<dbReference type="InterPro" id="IPR015424">
    <property type="entry name" value="PyrdxlP-dep_Trfase"/>
</dbReference>
<dbReference type="InterPro" id="IPR015421">
    <property type="entry name" value="PyrdxlP-dep_Trfase_major"/>
</dbReference>
<dbReference type="InterPro" id="IPR015422">
    <property type="entry name" value="PyrdxlP-dep_Trfase_small"/>
</dbReference>
<dbReference type="InterPro" id="IPR001085">
    <property type="entry name" value="Ser_HO-MeTrfase"/>
</dbReference>
<dbReference type="InterPro" id="IPR049943">
    <property type="entry name" value="Ser_HO-MeTrfase-like"/>
</dbReference>
<dbReference type="InterPro" id="IPR019798">
    <property type="entry name" value="Ser_HO-MeTrfase_PLP_BS"/>
</dbReference>
<dbReference type="InterPro" id="IPR039429">
    <property type="entry name" value="SHMT-like_dom"/>
</dbReference>
<dbReference type="NCBIfam" id="NF000586">
    <property type="entry name" value="PRK00011.1"/>
    <property type="match status" value="1"/>
</dbReference>
<dbReference type="PANTHER" id="PTHR11680">
    <property type="entry name" value="SERINE HYDROXYMETHYLTRANSFERASE"/>
    <property type="match status" value="1"/>
</dbReference>
<dbReference type="PANTHER" id="PTHR11680:SF35">
    <property type="entry name" value="SERINE HYDROXYMETHYLTRANSFERASE 1"/>
    <property type="match status" value="1"/>
</dbReference>
<dbReference type="Pfam" id="PF00464">
    <property type="entry name" value="SHMT"/>
    <property type="match status" value="1"/>
</dbReference>
<dbReference type="PIRSF" id="PIRSF000412">
    <property type="entry name" value="SHMT"/>
    <property type="match status" value="1"/>
</dbReference>
<dbReference type="SUPFAM" id="SSF53383">
    <property type="entry name" value="PLP-dependent transferases"/>
    <property type="match status" value="1"/>
</dbReference>
<dbReference type="PROSITE" id="PS00096">
    <property type="entry name" value="SHMT"/>
    <property type="match status" value="1"/>
</dbReference>
<accession>Q7V4U3</accession>
<sequence>MTDRFLASINAALTDSDPAIAGLIDQERQRQETHLELIASENFTSQAVMQAQGSVLTNKYAEGLPHKRYYGGCEHVDAIEELAIERAQRLFGAAWANVQPHSGAQANFAVFLALLQPGDTIMGMDLSHGGHLTHGSPVNVSGKWFKVVHYGVERDSQQLDMEAVRQLALKERPQLIICGYSAYPRTIDFAAFRSIADEVGAYLLADMAHIAGLVAAGVHPSPIAHCDVVTTTTHKTLRGPRGGLILCRDADFGRKFDKAVFPGSQGGPLEHVIAAKAVALGEALQPEFQVYSCQVVANAQVLAGRIQERGIAVVSGGTDNHLVLLDLRSIGMTGKVADLLVSEVNITANKNTVPFDPESPFVTSGLRLGTAALTTRGFDDEAFREVADVIADRLLKPQDESIKAQCLERVRQLCGRFPLYRDVLQPALA</sequence>
<feature type="chain" id="PRO_0000113635" description="Serine hydroxymethyltransferase">
    <location>
        <begin position="1"/>
        <end position="429"/>
    </location>
</feature>
<feature type="binding site" evidence="1">
    <location>
        <position position="126"/>
    </location>
    <ligand>
        <name>(6S)-5,6,7,8-tetrahydrofolate</name>
        <dbReference type="ChEBI" id="CHEBI:57453"/>
    </ligand>
</feature>
<feature type="binding site" evidence="1">
    <location>
        <begin position="130"/>
        <end position="132"/>
    </location>
    <ligand>
        <name>(6S)-5,6,7,8-tetrahydrofolate</name>
        <dbReference type="ChEBI" id="CHEBI:57453"/>
    </ligand>
</feature>
<feature type="binding site" evidence="1">
    <location>
        <begin position="359"/>
        <end position="361"/>
    </location>
    <ligand>
        <name>(6S)-5,6,7,8-tetrahydrofolate</name>
        <dbReference type="ChEBI" id="CHEBI:57453"/>
    </ligand>
</feature>
<feature type="site" description="Plays an important role in substrate specificity" evidence="1">
    <location>
        <position position="234"/>
    </location>
</feature>
<feature type="modified residue" description="N6-(pyridoxal phosphate)lysine" evidence="1">
    <location>
        <position position="235"/>
    </location>
</feature>
<keyword id="KW-0028">Amino-acid biosynthesis</keyword>
<keyword id="KW-0963">Cytoplasm</keyword>
<keyword id="KW-0554">One-carbon metabolism</keyword>
<keyword id="KW-0663">Pyridoxal phosphate</keyword>
<keyword id="KW-1185">Reference proteome</keyword>
<keyword id="KW-0808">Transferase</keyword>
<evidence type="ECO:0000255" key="1">
    <source>
        <dbReference type="HAMAP-Rule" id="MF_00051"/>
    </source>
</evidence>
<proteinExistence type="inferred from homology"/>
<name>GLYA_PROMM</name>
<organism>
    <name type="scientific">Prochlorococcus marinus (strain MIT 9313)</name>
    <dbReference type="NCBI Taxonomy" id="74547"/>
    <lineage>
        <taxon>Bacteria</taxon>
        <taxon>Bacillati</taxon>
        <taxon>Cyanobacteriota</taxon>
        <taxon>Cyanophyceae</taxon>
        <taxon>Synechococcales</taxon>
        <taxon>Prochlorococcaceae</taxon>
        <taxon>Prochlorococcus</taxon>
    </lineage>
</organism>
<protein>
    <recommendedName>
        <fullName evidence="1">Serine hydroxymethyltransferase</fullName>
        <shortName evidence="1">SHMT</shortName>
        <shortName evidence="1">Serine methylase</shortName>
        <ecNumber evidence="1">2.1.2.1</ecNumber>
    </recommendedName>
</protein>
<gene>
    <name evidence="1" type="primary">glyA</name>
    <name type="ordered locus">PMT_1847</name>
</gene>